<organism>
    <name type="scientific">Nicotiana tabacum</name>
    <name type="common">Common tobacco</name>
    <dbReference type="NCBI Taxonomy" id="4097"/>
    <lineage>
        <taxon>Eukaryota</taxon>
        <taxon>Viridiplantae</taxon>
        <taxon>Streptophyta</taxon>
        <taxon>Embryophyta</taxon>
        <taxon>Tracheophyta</taxon>
        <taxon>Spermatophyta</taxon>
        <taxon>Magnoliopsida</taxon>
        <taxon>eudicotyledons</taxon>
        <taxon>Gunneridae</taxon>
        <taxon>Pentapetalae</taxon>
        <taxon>asterids</taxon>
        <taxon>lamiids</taxon>
        <taxon>Solanales</taxon>
        <taxon>Solanaceae</taxon>
        <taxon>Nicotianoideae</taxon>
        <taxon>Nicotianeae</taxon>
        <taxon>Nicotiana</taxon>
    </lineage>
</organism>
<name>CWP33_TOBAC</name>
<sequence>SPPAPFVPVPIN</sequence>
<protein>
    <recommendedName>
        <fullName>26 kDa cell wall protein</fullName>
    </recommendedName>
</protein>
<comment type="subcellular location">
    <subcellularLocation>
        <location evidence="1">Secreted</location>
        <location evidence="1">Cell wall</location>
    </subcellularLocation>
</comment>
<accession>P82441</accession>
<keyword id="KW-0134">Cell wall</keyword>
<keyword id="KW-0903">Direct protein sequencing</keyword>
<keyword id="KW-1185">Reference proteome</keyword>
<keyword id="KW-0964">Secreted</keyword>
<proteinExistence type="evidence at protein level"/>
<evidence type="ECO:0000269" key="1">
    <source>
    </source>
</evidence>
<evidence type="ECO:0000303" key="2">
    <source>
    </source>
</evidence>
<evidence type="ECO:0000305" key="3"/>
<dbReference type="PaxDb" id="4097-P82441"/>
<dbReference type="Proteomes" id="UP000084051">
    <property type="component" value="Unplaced"/>
</dbReference>
<dbReference type="GO" id="GO:0005576">
    <property type="term" value="C:extracellular region"/>
    <property type="evidence" value="ECO:0007669"/>
    <property type="project" value="UniProtKB-KW"/>
</dbReference>
<feature type="chain" id="PRO_0000079723" description="26 kDa cell wall protein">
    <location>
        <begin position="1"/>
        <end position="12" status="greater than"/>
    </location>
</feature>
<feature type="non-terminal residue" evidence="2">
    <location>
        <position position="12"/>
    </location>
</feature>
<reference evidence="3" key="1">
    <citation type="journal article" date="2001" name="Planta">
        <title>Proteomic analysis reveals a novel set of cell wall proteins in a transformed tobacco cell culture that synthesises secondary walls as determined by biochemical and morphological parameters.</title>
        <authorList>
            <person name="Blee K.A."/>
            <person name="Wheatley E.R."/>
            <person name="Bonham V.A."/>
            <person name="Mitchell G.P."/>
            <person name="Robertson D."/>
            <person name="Slabas A.R."/>
            <person name="Burrell M.M."/>
            <person name="Wojtaszek P."/>
            <person name="Bolwell G.P."/>
        </authorList>
    </citation>
    <scope>PROTEIN SEQUENCE</scope>
    <scope>SUBCELLULAR LOCATION</scope>
    <source>
        <strain evidence="1">cv. Petit Havana</strain>
    </source>
</reference>